<name>FER_SOLLY</name>
<protein>
    <recommendedName>
        <fullName>Ferredoxin</fullName>
    </recommendedName>
</protein>
<accession>P83583</accession>
<reference evidence="3" key="1">
    <citation type="journal article" date="2003" name="Phytochemistry">
        <title>Large differences in amino acid sequences among ferredoxins from several species of genus Solanum.</title>
        <authorList>
            <person name="Mino Y."/>
            <person name="Hazama T."/>
            <person name="Machida Y."/>
        </authorList>
    </citation>
    <scope>PROTEIN SEQUENCE</scope>
    <scope>FUNCTION</scope>
    <scope>COFACTOR</scope>
    <scope>SUBCELLULAR LOCATION</scope>
    <source>
        <tissue evidence="2">Leaf</tissue>
    </source>
</reference>
<dbReference type="SMR" id="P83583"/>
<dbReference type="GO" id="GO:0009507">
    <property type="term" value="C:chloroplast"/>
    <property type="evidence" value="ECO:0000304"/>
    <property type="project" value="UniProtKB"/>
</dbReference>
<dbReference type="GO" id="GO:0009570">
    <property type="term" value="C:chloroplast stroma"/>
    <property type="evidence" value="ECO:0007669"/>
    <property type="project" value="TreeGrafter"/>
</dbReference>
<dbReference type="GO" id="GO:0051537">
    <property type="term" value="F:2 iron, 2 sulfur cluster binding"/>
    <property type="evidence" value="ECO:0007669"/>
    <property type="project" value="UniProtKB-KW"/>
</dbReference>
<dbReference type="GO" id="GO:0009055">
    <property type="term" value="F:electron transfer activity"/>
    <property type="evidence" value="ECO:0000304"/>
    <property type="project" value="UniProtKB"/>
</dbReference>
<dbReference type="GO" id="GO:0008198">
    <property type="term" value="F:ferrous iron binding"/>
    <property type="evidence" value="ECO:0000303"/>
    <property type="project" value="UniProtKB"/>
</dbReference>
<dbReference type="GO" id="GO:0022900">
    <property type="term" value="P:electron transport chain"/>
    <property type="evidence" value="ECO:0007669"/>
    <property type="project" value="InterPro"/>
</dbReference>
<dbReference type="GO" id="GO:0006124">
    <property type="term" value="P:ferredoxin metabolic process"/>
    <property type="evidence" value="ECO:0000304"/>
    <property type="project" value="UniProtKB"/>
</dbReference>
<dbReference type="CDD" id="cd00207">
    <property type="entry name" value="fer2"/>
    <property type="match status" value="1"/>
</dbReference>
<dbReference type="FunFam" id="3.10.20.30:FF:000014">
    <property type="entry name" value="Ferredoxin"/>
    <property type="match status" value="1"/>
</dbReference>
<dbReference type="Gene3D" id="3.10.20.30">
    <property type="match status" value="1"/>
</dbReference>
<dbReference type="InterPro" id="IPR036010">
    <property type="entry name" value="2Fe-2S_ferredoxin-like_sf"/>
</dbReference>
<dbReference type="InterPro" id="IPR001041">
    <property type="entry name" value="2Fe-2S_ferredoxin-type"/>
</dbReference>
<dbReference type="InterPro" id="IPR006058">
    <property type="entry name" value="2Fe2S_fd_BS"/>
</dbReference>
<dbReference type="InterPro" id="IPR012675">
    <property type="entry name" value="Beta-grasp_dom_sf"/>
</dbReference>
<dbReference type="InterPro" id="IPR010241">
    <property type="entry name" value="Fd_pln"/>
</dbReference>
<dbReference type="NCBIfam" id="TIGR02008">
    <property type="entry name" value="fdx_plant"/>
    <property type="match status" value="1"/>
</dbReference>
<dbReference type="PANTHER" id="PTHR43112">
    <property type="entry name" value="FERREDOXIN"/>
    <property type="match status" value="1"/>
</dbReference>
<dbReference type="PANTHER" id="PTHR43112:SF34">
    <property type="entry name" value="FERREDOXIN"/>
    <property type="match status" value="1"/>
</dbReference>
<dbReference type="Pfam" id="PF00111">
    <property type="entry name" value="Fer2"/>
    <property type="match status" value="1"/>
</dbReference>
<dbReference type="SUPFAM" id="SSF54292">
    <property type="entry name" value="2Fe-2S ferredoxin-like"/>
    <property type="match status" value="1"/>
</dbReference>
<dbReference type="PROSITE" id="PS00197">
    <property type="entry name" value="2FE2S_FER_1"/>
    <property type="match status" value="1"/>
</dbReference>
<dbReference type="PROSITE" id="PS51085">
    <property type="entry name" value="2FE2S_FER_2"/>
    <property type="match status" value="1"/>
</dbReference>
<organism evidence="3">
    <name type="scientific">Solanum lyratum</name>
    <name type="common">Lyreleaf nightshade</name>
    <dbReference type="NCBI Taxonomy" id="230192"/>
    <lineage>
        <taxon>Eukaryota</taxon>
        <taxon>Viridiplantae</taxon>
        <taxon>Streptophyta</taxon>
        <taxon>Embryophyta</taxon>
        <taxon>Tracheophyta</taxon>
        <taxon>Spermatophyta</taxon>
        <taxon>Magnoliopsida</taxon>
        <taxon>eudicotyledons</taxon>
        <taxon>Gunneridae</taxon>
        <taxon>Pentapetalae</taxon>
        <taxon>asterids</taxon>
        <taxon>lamiids</taxon>
        <taxon>Solanales</taxon>
        <taxon>Solanaceae</taxon>
        <taxon>Solanoideae</taxon>
        <taxon>Solaneae</taxon>
        <taxon>Solanum</taxon>
    </lineage>
</organism>
<comment type="function">
    <text evidence="2">Ferredoxins are iron-sulfur proteins that transfer electrons in a wide variety of metabolic reactions.</text>
</comment>
<comment type="cofactor">
    <cofactor evidence="2">
        <name>[2Fe-2S] cluster</name>
        <dbReference type="ChEBI" id="CHEBI:190135"/>
    </cofactor>
    <text evidence="2">Binds 1 [2Fe-2S] cluster.</text>
</comment>
<comment type="subcellular location">
    <subcellularLocation>
        <location evidence="2">Plastid</location>
        <location evidence="2">Chloroplast</location>
    </subcellularLocation>
</comment>
<comment type="similarity">
    <text evidence="3">Belongs to the 2Fe2S plant-type ferredoxin family.</text>
</comment>
<feature type="chain" id="PRO_0000189367" description="Ferredoxin">
    <location>
        <begin position="1"/>
        <end position="97"/>
    </location>
</feature>
<feature type="domain" description="2Fe-2S ferredoxin-type" evidence="1">
    <location>
        <begin position="3"/>
        <end position="93"/>
    </location>
</feature>
<feature type="binding site" evidence="1">
    <location>
        <position position="39"/>
    </location>
    <ligand>
        <name>[2Fe-2S] cluster</name>
        <dbReference type="ChEBI" id="CHEBI:190135"/>
    </ligand>
</feature>
<feature type="binding site" evidence="1">
    <location>
        <position position="44"/>
    </location>
    <ligand>
        <name>[2Fe-2S] cluster</name>
        <dbReference type="ChEBI" id="CHEBI:190135"/>
    </ligand>
</feature>
<feature type="binding site" evidence="1">
    <location>
        <position position="47"/>
    </location>
    <ligand>
        <name>[2Fe-2S] cluster</name>
        <dbReference type="ChEBI" id="CHEBI:190135"/>
    </ligand>
</feature>
<feature type="binding site" evidence="1">
    <location>
        <position position="77"/>
    </location>
    <ligand>
        <name>[2Fe-2S] cluster</name>
        <dbReference type="ChEBI" id="CHEBI:190135"/>
    </ligand>
</feature>
<sequence length="97" mass="10389">ATYKVKLITPEGPVEFNCPDDVYILDSAEENGHDLPYSCRAGACSSCAGKITAGNVDQSDNSFLDDDQVAEGFVLTCVAYPKSNVTIETHKEDDLVG</sequence>
<keyword id="KW-0001">2Fe-2S</keyword>
<keyword id="KW-0150">Chloroplast</keyword>
<keyword id="KW-0903">Direct protein sequencing</keyword>
<keyword id="KW-0249">Electron transport</keyword>
<keyword id="KW-0408">Iron</keyword>
<keyword id="KW-0411">Iron-sulfur</keyword>
<keyword id="KW-0479">Metal-binding</keyword>
<keyword id="KW-0934">Plastid</keyword>
<keyword id="KW-0813">Transport</keyword>
<proteinExistence type="evidence at protein level"/>
<evidence type="ECO:0000255" key="1">
    <source>
        <dbReference type="PROSITE-ProRule" id="PRU00465"/>
    </source>
</evidence>
<evidence type="ECO:0000269" key="2">
    <source>
    </source>
</evidence>
<evidence type="ECO:0000305" key="3"/>